<reference key="1">
    <citation type="journal article" date="2010" name="Stand. Genomic Sci.">
        <title>Complete genome sequence of Rhizobium leguminosarum bv trifolii strain WSM2304, an effective microsymbiont of the South American clover Trifolium polymorphum.</title>
        <authorList>
            <person name="Reeve W."/>
            <person name="O'Hara G."/>
            <person name="Chain P."/>
            <person name="Ardley J."/>
            <person name="Brau L."/>
            <person name="Nandesena K."/>
            <person name="Tiwari R."/>
            <person name="Malfatti S."/>
            <person name="Kiss H."/>
            <person name="Lapidus A."/>
            <person name="Copeland A."/>
            <person name="Nolan M."/>
            <person name="Land M."/>
            <person name="Ivanova N."/>
            <person name="Mavromatis K."/>
            <person name="Markowitz V."/>
            <person name="Kyrpides N."/>
            <person name="Melino V."/>
            <person name="Denton M."/>
            <person name="Yates R."/>
            <person name="Howieson J."/>
        </authorList>
    </citation>
    <scope>NUCLEOTIDE SEQUENCE [LARGE SCALE GENOMIC DNA]</scope>
    <source>
        <strain>WSM2304</strain>
    </source>
</reference>
<keyword id="KW-0963">Cytoplasm</keyword>
<keyword id="KW-1185">Reference proteome</keyword>
<keyword id="KW-0690">Ribosome biogenesis</keyword>
<organism>
    <name type="scientific">Rhizobium leguminosarum bv. trifolii (strain WSM2304)</name>
    <dbReference type="NCBI Taxonomy" id="395492"/>
    <lineage>
        <taxon>Bacteria</taxon>
        <taxon>Pseudomonadati</taxon>
        <taxon>Pseudomonadota</taxon>
        <taxon>Alphaproteobacteria</taxon>
        <taxon>Hyphomicrobiales</taxon>
        <taxon>Rhizobiaceae</taxon>
        <taxon>Rhizobium/Agrobacterium group</taxon>
        <taxon>Rhizobium</taxon>
    </lineage>
</organism>
<proteinExistence type="inferred from homology"/>
<accession>B5ZW28</accession>
<gene>
    <name evidence="1" type="primary">rbfA</name>
    <name type="ordered locus">Rleg2_4066</name>
</gene>
<comment type="function">
    <text evidence="1">One of several proteins that assist in the late maturation steps of the functional core of the 30S ribosomal subunit. Associates with free 30S ribosomal subunits (but not with 30S subunits that are part of 70S ribosomes or polysomes). Required for efficient processing of 16S rRNA. May interact with the 5'-terminal helix region of 16S rRNA.</text>
</comment>
<comment type="subunit">
    <text evidence="1">Monomer. Binds 30S ribosomal subunits, but not 50S ribosomal subunits or 70S ribosomes.</text>
</comment>
<comment type="subcellular location">
    <subcellularLocation>
        <location evidence="1">Cytoplasm</location>
    </subcellularLocation>
</comment>
<comment type="similarity">
    <text evidence="1">Belongs to the RbfA family.</text>
</comment>
<feature type="chain" id="PRO_1000088921" description="Ribosome-binding factor A">
    <location>
        <begin position="1"/>
        <end position="134"/>
    </location>
</feature>
<protein>
    <recommendedName>
        <fullName evidence="1">Ribosome-binding factor A</fullName>
    </recommendedName>
</protein>
<evidence type="ECO:0000255" key="1">
    <source>
        <dbReference type="HAMAP-Rule" id="MF_00003"/>
    </source>
</evidence>
<name>RBFA_RHILW</name>
<dbReference type="EMBL" id="CP001191">
    <property type="protein sequence ID" value="ACI57328.1"/>
    <property type="molecule type" value="Genomic_DNA"/>
</dbReference>
<dbReference type="RefSeq" id="WP_012559487.1">
    <property type="nucleotide sequence ID" value="NC_011369.1"/>
</dbReference>
<dbReference type="SMR" id="B5ZW28"/>
<dbReference type="STRING" id="395492.Rleg2_4066"/>
<dbReference type="KEGG" id="rlt:Rleg2_4066"/>
<dbReference type="eggNOG" id="COG0858">
    <property type="taxonomic scope" value="Bacteria"/>
</dbReference>
<dbReference type="HOGENOM" id="CLU_089475_1_0_5"/>
<dbReference type="Proteomes" id="UP000008330">
    <property type="component" value="Chromosome"/>
</dbReference>
<dbReference type="GO" id="GO:0005829">
    <property type="term" value="C:cytosol"/>
    <property type="evidence" value="ECO:0007669"/>
    <property type="project" value="TreeGrafter"/>
</dbReference>
<dbReference type="GO" id="GO:0043024">
    <property type="term" value="F:ribosomal small subunit binding"/>
    <property type="evidence" value="ECO:0007669"/>
    <property type="project" value="TreeGrafter"/>
</dbReference>
<dbReference type="GO" id="GO:0030490">
    <property type="term" value="P:maturation of SSU-rRNA"/>
    <property type="evidence" value="ECO:0007669"/>
    <property type="project" value="UniProtKB-UniRule"/>
</dbReference>
<dbReference type="Gene3D" id="3.30.300.20">
    <property type="match status" value="1"/>
</dbReference>
<dbReference type="HAMAP" id="MF_00003">
    <property type="entry name" value="RbfA"/>
    <property type="match status" value="1"/>
</dbReference>
<dbReference type="InterPro" id="IPR015946">
    <property type="entry name" value="KH_dom-like_a/b"/>
</dbReference>
<dbReference type="InterPro" id="IPR000238">
    <property type="entry name" value="RbfA"/>
</dbReference>
<dbReference type="InterPro" id="IPR023799">
    <property type="entry name" value="RbfA_dom_sf"/>
</dbReference>
<dbReference type="InterPro" id="IPR020053">
    <property type="entry name" value="Ribosome-bd_factorA_CS"/>
</dbReference>
<dbReference type="NCBIfam" id="NF001802">
    <property type="entry name" value="PRK00521.2-5"/>
    <property type="match status" value="1"/>
</dbReference>
<dbReference type="NCBIfam" id="TIGR00082">
    <property type="entry name" value="rbfA"/>
    <property type="match status" value="1"/>
</dbReference>
<dbReference type="PANTHER" id="PTHR33515">
    <property type="entry name" value="RIBOSOME-BINDING FACTOR A, CHLOROPLASTIC-RELATED"/>
    <property type="match status" value="1"/>
</dbReference>
<dbReference type="PANTHER" id="PTHR33515:SF1">
    <property type="entry name" value="RIBOSOME-BINDING FACTOR A, CHLOROPLASTIC-RELATED"/>
    <property type="match status" value="1"/>
</dbReference>
<dbReference type="Pfam" id="PF02033">
    <property type="entry name" value="RBFA"/>
    <property type="match status" value="1"/>
</dbReference>
<dbReference type="SUPFAM" id="SSF89919">
    <property type="entry name" value="Ribosome-binding factor A, RbfA"/>
    <property type="match status" value="1"/>
</dbReference>
<dbReference type="PROSITE" id="PS01319">
    <property type="entry name" value="RBFA"/>
    <property type="match status" value="1"/>
</dbReference>
<sequence length="134" mass="15276">MTRATSSAPSQRMLRVGEQVRAAITQVLQRGEVRDDVIEATVISISEVRMSPDLKIATAYVTPLGVSDHSVVIEALNRHARYIRGRLGQQLRQMKYMPEVRFRDDTSFDNYKKIDELLRSPEVSRDLDGDNDEQ</sequence>